<feature type="chain" id="PRO_0000254099" description="RIB43A-like with coiled-coils protein 2">
    <location>
        <begin position="1"/>
        <end position="377"/>
    </location>
</feature>
<feature type="region of interest" description="Disordered" evidence="3">
    <location>
        <begin position="354"/>
        <end position="377"/>
    </location>
</feature>
<feature type="coiled-coil region" evidence="2">
    <location>
        <begin position="217"/>
        <end position="246"/>
    </location>
</feature>
<proteinExistence type="evidence at protein level"/>
<keyword id="KW-0002">3D-structure</keyword>
<keyword id="KW-0966">Cell projection</keyword>
<keyword id="KW-0969">Cilium</keyword>
<keyword id="KW-0175">Coiled coil</keyword>
<keyword id="KW-0963">Cytoplasm</keyword>
<keyword id="KW-0206">Cytoskeleton</keyword>
<keyword id="KW-0282">Flagellum</keyword>
<keyword id="KW-1185">Reference proteome</keyword>
<dbReference type="EMBL" id="AK016311">
    <property type="protein sequence ID" value="BAB30190.2"/>
    <property type="status" value="ALT_INIT"/>
    <property type="molecule type" value="mRNA"/>
</dbReference>
<dbReference type="EMBL" id="AL772308">
    <property type="status" value="NOT_ANNOTATED_CDS"/>
    <property type="molecule type" value="Genomic_DNA"/>
</dbReference>
<dbReference type="EMBL" id="CH466550">
    <property type="protein sequence ID" value="EDL04439.1"/>
    <property type="molecule type" value="Genomic_DNA"/>
</dbReference>
<dbReference type="EMBL" id="BC112373">
    <property type="protein sequence ID" value="AAI12374.1"/>
    <property type="status" value="ALT_INIT"/>
    <property type="molecule type" value="mRNA"/>
</dbReference>
<dbReference type="CCDS" id="CCDS49689.1"/>
<dbReference type="RefSeq" id="NP_080633.2">
    <property type="nucleotide sequence ID" value="NM_026357.2"/>
</dbReference>
<dbReference type="PDB" id="8I7R">
    <property type="method" value="EM"/>
    <property type="resolution" value="6.50 A"/>
    <property type="chains" value="O/P/Q/R=1-377"/>
</dbReference>
<dbReference type="PDB" id="8IYJ">
    <property type="method" value="EM"/>
    <property type="resolution" value="3.50 A"/>
    <property type="chains" value="R/S=1-377"/>
</dbReference>
<dbReference type="PDB" id="8TO0">
    <property type="method" value="EM"/>
    <property type="resolution" value="7.70 A"/>
    <property type="chains" value="D4/DZ/Do/EI/EX=1-377"/>
</dbReference>
<dbReference type="PDBsum" id="8I7R"/>
<dbReference type="PDBsum" id="8IYJ"/>
<dbReference type="PDBsum" id="8TO0"/>
<dbReference type="EMDB" id="EMD-35230"/>
<dbReference type="EMDB" id="EMD-35823"/>
<dbReference type="EMDB" id="EMD-41431"/>
<dbReference type="SMR" id="Q9D4Q1"/>
<dbReference type="BioGRID" id="212415">
    <property type="interactions" value="4"/>
</dbReference>
<dbReference type="FunCoup" id="Q9D4Q1">
    <property type="interactions" value="42"/>
</dbReference>
<dbReference type="STRING" id="10090.ENSMUSP00000023067"/>
<dbReference type="iPTMnet" id="Q9D4Q1"/>
<dbReference type="PhosphoSitePlus" id="Q9D4Q1"/>
<dbReference type="PaxDb" id="10090-ENSMUSP00000023067"/>
<dbReference type="ProteomicsDB" id="253283"/>
<dbReference type="ProteomicsDB" id="329132"/>
<dbReference type="Antibodypedia" id="303">
    <property type="antibodies" value="99 antibodies from 16 providers"/>
</dbReference>
<dbReference type="Ensembl" id="ENSMUST00000023067.4">
    <property type="protein sequence ID" value="ENSMUSP00000023067.3"/>
    <property type="gene ID" value="ENSMUSG00000022431.4"/>
</dbReference>
<dbReference type="GeneID" id="67747"/>
<dbReference type="KEGG" id="mmu:67747"/>
<dbReference type="UCSC" id="uc007xcz.2">
    <property type="organism name" value="mouse"/>
</dbReference>
<dbReference type="AGR" id="MGI:1914997"/>
<dbReference type="CTD" id="26150"/>
<dbReference type="MGI" id="MGI:1914997">
    <property type="gene designation" value="Ribc2"/>
</dbReference>
<dbReference type="VEuPathDB" id="HostDB:ENSMUSG00000022431"/>
<dbReference type="eggNOG" id="ENOG502QWST">
    <property type="taxonomic scope" value="Eukaryota"/>
</dbReference>
<dbReference type="GeneTree" id="ENSGT00390000010825"/>
<dbReference type="HOGENOM" id="CLU_061822_0_1_1"/>
<dbReference type="InParanoid" id="Q9D4Q1"/>
<dbReference type="OMA" id="NLCRAIN"/>
<dbReference type="OrthoDB" id="429119at2759"/>
<dbReference type="PhylomeDB" id="Q9D4Q1"/>
<dbReference type="TreeFam" id="TF324120"/>
<dbReference type="BioGRID-ORCS" id="67747">
    <property type="hits" value="2 hits in 79 CRISPR screens"/>
</dbReference>
<dbReference type="PRO" id="PR:Q9D4Q1"/>
<dbReference type="Proteomes" id="UP000000589">
    <property type="component" value="Chromosome 15"/>
</dbReference>
<dbReference type="RNAct" id="Q9D4Q1">
    <property type="molecule type" value="protein"/>
</dbReference>
<dbReference type="Bgee" id="ENSMUSG00000022431">
    <property type="expression patterns" value="Expressed in gastrula and 62 other cell types or tissues"/>
</dbReference>
<dbReference type="ExpressionAtlas" id="Q9D4Q1">
    <property type="expression patterns" value="baseline and differential"/>
</dbReference>
<dbReference type="GO" id="GO:0160111">
    <property type="term" value="C:axonemal A tubule inner sheath"/>
    <property type="evidence" value="ECO:0000314"/>
    <property type="project" value="UniProtKB"/>
</dbReference>
<dbReference type="GO" id="GO:0005879">
    <property type="term" value="C:axonemal microtubule"/>
    <property type="evidence" value="ECO:0000250"/>
    <property type="project" value="UniProtKB"/>
</dbReference>
<dbReference type="GO" id="GO:0036126">
    <property type="term" value="C:sperm flagellum"/>
    <property type="evidence" value="ECO:0000314"/>
    <property type="project" value="UniProtKB"/>
</dbReference>
<dbReference type="GO" id="GO:0030317">
    <property type="term" value="P:flagellated sperm motility"/>
    <property type="evidence" value="ECO:0000314"/>
    <property type="project" value="UniProtKB"/>
</dbReference>
<dbReference type="InterPro" id="IPR008805">
    <property type="entry name" value="RIB43A"/>
</dbReference>
<dbReference type="PANTHER" id="PTHR14517:SF10">
    <property type="entry name" value="RIB43A-LIKE WITH COILED-COILS PROTEIN 2"/>
    <property type="match status" value="1"/>
</dbReference>
<dbReference type="PANTHER" id="PTHR14517">
    <property type="entry name" value="RIB43A-RELATED"/>
    <property type="match status" value="1"/>
</dbReference>
<dbReference type="Pfam" id="PF05914">
    <property type="entry name" value="RIB43A"/>
    <property type="match status" value="1"/>
</dbReference>
<sequence length="377" mass="45244">MEVAMSKDLQQEANLAKKRYIDLCRQGRIFDARNRIIGGDTQAWDFQVRDQKIKEITDKARHEAFAAEMKHNDKVMCMAHDREQRHRKQLCRAINDFQQNFQKPETRREFDLSDPLALQKELPARISDNDMRNTISGMQKFMGEDLNFQERRRFQKEQSREWFLQQHGEREKARADHLLAEHLHTQTRLKFDETARELMKLEGSTRKEVCAAVKAFNKNQVVELTERKRQEKQQEQEDNMTEITNLLHGDLLSENPRPVASSFGSHRVVLDRWKGMNREQLEEIWFTQKRQIQEKLRLQEEERQHSMDWDLRRIRKAHASLLHERQQQRLLREQRRALDCSNLNLARQQYLQKKQMNTASSSQPTEDYFSQFNTRSR</sequence>
<protein>
    <recommendedName>
        <fullName evidence="7">RIB43A-like with coiled-coils protein 2</fullName>
    </recommendedName>
</protein>
<gene>
    <name evidence="8" type="primary">Ribc2</name>
</gene>
<comment type="function">
    <text evidence="4 5 6">Microtubule inner protein (MIP) part of the dynein-decorated doublet microtubules (DMTs) in cilia axoneme, which is required for motile cilia beating.</text>
</comment>
<comment type="subunit">
    <text evidence="4 5 6">Microtubule inner protein component of sperm flagellar doublet microtubules.</text>
</comment>
<comment type="subcellular location">
    <subcellularLocation>
        <location evidence="1">Cytoplasm</location>
        <location evidence="1">Cytoskeleton</location>
        <location evidence="1">Cilium axoneme</location>
    </subcellularLocation>
    <subcellularLocation>
        <location evidence="4 5 6">Cytoplasm</location>
        <location evidence="4 5 6">Cytoskeleton</location>
        <location evidence="4 5 6">Flagellum axoneme</location>
    </subcellularLocation>
</comment>
<comment type="similarity">
    <text evidence="7">Belongs to the RIB43A family.</text>
</comment>
<comment type="sequence caution" evidence="7">
    <conflict type="erroneous initiation">
        <sequence resource="EMBL-CDS" id="AAI12374"/>
    </conflict>
    <text>Truncated N-terminus.</text>
</comment>
<comment type="sequence caution" evidence="7">
    <conflict type="erroneous initiation">
        <sequence resource="EMBL-CDS" id="BAB30190"/>
    </conflict>
    <text>Truncated N-terminus.</text>
</comment>
<accession>Q9D4Q1</accession>
<accession>G3X8W0</accession>
<evidence type="ECO:0000250" key="1">
    <source>
        <dbReference type="UniProtKB" id="Q32LJ7"/>
    </source>
</evidence>
<evidence type="ECO:0000255" key="2"/>
<evidence type="ECO:0000256" key="3">
    <source>
        <dbReference type="SAM" id="MobiDB-lite"/>
    </source>
</evidence>
<evidence type="ECO:0000269" key="4">
    <source>
    </source>
</evidence>
<evidence type="ECO:0000269" key="5">
    <source>
    </source>
</evidence>
<evidence type="ECO:0000269" key="6">
    <source>
    </source>
</evidence>
<evidence type="ECO:0000305" key="7"/>
<evidence type="ECO:0000312" key="8">
    <source>
        <dbReference type="MGI" id="MGI:1914997"/>
    </source>
</evidence>
<evidence type="ECO:0007744" key="9">
    <source>
        <dbReference type="PDB" id="8I7R"/>
    </source>
</evidence>
<evidence type="ECO:0007744" key="10">
    <source>
        <dbReference type="PDB" id="8IYJ"/>
    </source>
</evidence>
<evidence type="ECO:0007744" key="11">
    <source>
        <dbReference type="PDB" id="8TO0"/>
    </source>
</evidence>
<name>RIBC2_MOUSE</name>
<organism>
    <name type="scientific">Mus musculus</name>
    <name type="common">Mouse</name>
    <dbReference type="NCBI Taxonomy" id="10090"/>
    <lineage>
        <taxon>Eukaryota</taxon>
        <taxon>Metazoa</taxon>
        <taxon>Chordata</taxon>
        <taxon>Craniata</taxon>
        <taxon>Vertebrata</taxon>
        <taxon>Euteleostomi</taxon>
        <taxon>Mammalia</taxon>
        <taxon>Eutheria</taxon>
        <taxon>Euarchontoglires</taxon>
        <taxon>Glires</taxon>
        <taxon>Rodentia</taxon>
        <taxon>Myomorpha</taxon>
        <taxon>Muroidea</taxon>
        <taxon>Muridae</taxon>
        <taxon>Murinae</taxon>
        <taxon>Mus</taxon>
        <taxon>Mus</taxon>
    </lineage>
</organism>
<reference key="1">
    <citation type="journal article" date="2005" name="Science">
        <title>The transcriptional landscape of the mammalian genome.</title>
        <authorList>
            <person name="Carninci P."/>
            <person name="Kasukawa T."/>
            <person name="Katayama S."/>
            <person name="Gough J."/>
            <person name="Frith M.C."/>
            <person name="Maeda N."/>
            <person name="Oyama R."/>
            <person name="Ravasi T."/>
            <person name="Lenhard B."/>
            <person name="Wells C."/>
            <person name="Kodzius R."/>
            <person name="Shimokawa K."/>
            <person name="Bajic V.B."/>
            <person name="Brenner S.E."/>
            <person name="Batalov S."/>
            <person name="Forrest A.R."/>
            <person name="Zavolan M."/>
            <person name="Davis M.J."/>
            <person name="Wilming L.G."/>
            <person name="Aidinis V."/>
            <person name="Allen J.E."/>
            <person name="Ambesi-Impiombato A."/>
            <person name="Apweiler R."/>
            <person name="Aturaliya R.N."/>
            <person name="Bailey T.L."/>
            <person name="Bansal M."/>
            <person name="Baxter L."/>
            <person name="Beisel K.W."/>
            <person name="Bersano T."/>
            <person name="Bono H."/>
            <person name="Chalk A.M."/>
            <person name="Chiu K.P."/>
            <person name="Choudhary V."/>
            <person name="Christoffels A."/>
            <person name="Clutterbuck D.R."/>
            <person name="Crowe M.L."/>
            <person name="Dalla E."/>
            <person name="Dalrymple B.P."/>
            <person name="de Bono B."/>
            <person name="Della Gatta G."/>
            <person name="di Bernardo D."/>
            <person name="Down T."/>
            <person name="Engstrom P."/>
            <person name="Fagiolini M."/>
            <person name="Faulkner G."/>
            <person name="Fletcher C.F."/>
            <person name="Fukushima T."/>
            <person name="Furuno M."/>
            <person name="Futaki S."/>
            <person name="Gariboldi M."/>
            <person name="Georgii-Hemming P."/>
            <person name="Gingeras T.R."/>
            <person name="Gojobori T."/>
            <person name="Green R.E."/>
            <person name="Gustincich S."/>
            <person name="Harbers M."/>
            <person name="Hayashi Y."/>
            <person name="Hensch T.K."/>
            <person name="Hirokawa N."/>
            <person name="Hill D."/>
            <person name="Huminiecki L."/>
            <person name="Iacono M."/>
            <person name="Ikeo K."/>
            <person name="Iwama A."/>
            <person name="Ishikawa T."/>
            <person name="Jakt M."/>
            <person name="Kanapin A."/>
            <person name="Katoh M."/>
            <person name="Kawasawa Y."/>
            <person name="Kelso J."/>
            <person name="Kitamura H."/>
            <person name="Kitano H."/>
            <person name="Kollias G."/>
            <person name="Krishnan S.P."/>
            <person name="Kruger A."/>
            <person name="Kummerfeld S.K."/>
            <person name="Kurochkin I.V."/>
            <person name="Lareau L.F."/>
            <person name="Lazarevic D."/>
            <person name="Lipovich L."/>
            <person name="Liu J."/>
            <person name="Liuni S."/>
            <person name="McWilliam S."/>
            <person name="Madan Babu M."/>
            <person name="Madera M."/>
            <person name="Marchionni L."/>
            <person name="Matsuda H."/>
            <person name="Matsuzawa S."/>
            <person name="Miki H."/>
            <person name="Mignone F."/>
            <person name="Miyake S."/>
            <person name="Morris K."/>
            <person name="Mottagui-Tabar S."/>
            <person name="Mulder N."/>
            <person name="Nakano N."/>
            <person name="Nakauchi H."/>
            <person name="Ng P."/>
            <person name="Nilsson R."/>
            <person name="Nishiguchi S."/>
            <person name="Nishikawa S."/>
            <person name="Nori F."/>
            <person name="Ohara O."/>
            <person name="Okazaki Y."/>
            <person name="Orlando V."/>
            <person name="Pang K.C."/>
            <person name="Pavan W.J."/>
            <person name="Pavesi G."/>
            <person name="Pesole G."/>
            <person name="Petrovsky N."/>
            <person name="Piazza S."/>
            <person name="Reed J."/>
            <person name="Reid J.F."/>
            <person name="Ring B.Z."/>
            <person name="Ringwald M."/>
            <person name="Rost B."/>
            <person name="Ruan Y."/>
            <person name="Salzberg S.L."/>
            <person name="Sandelin A."/>
            <person name="Schneider C."/>
            <person name="Schoenbach C."/>
            <person name="Sekiguchi K."/>
            <person name="Semple C.A."/>
            <person name="Seno S."/>
            <person name="Sessa L."/>
            <person name="Sheng Y."/>
            <person name="Shibata Y."/>
            <person name="Shimada H."/>
            <person name="Shimada K."/>
            <person name="Silva D."/>
            <person name="Sinclair B."/>
            <person name="Sperling S."/>
            <person name="Stupka E."/>
            <person name="Sugiura K."/>
            <person name="Sultana R."/>
            <person name="Takenaka Y."/>
            <person name="Taki K."/>
            <person name="Tammoja K."/>
            <person name="Tan S.L."/>
            <person name="Tang S."/>
            <person name="Taylor M.S."/>
            <person name="Tegner J."/>
            <person name="Teichmann S.A."/>
            <person name="Ueda H.R."/>
            <person name="van Nimwegen E."/>
            <person name="Verardo R."/>
            <person name="Wei C.L."/>
            <person name="Yagi K."/>
            <person name="Yamanishi H."/>
            <person name="Zabarovsky E."/>
            <person name="Zhu S."/>
            <person name="Zimmer A."/>
            <person name="Hide W."/>
            <person name="Bult C."/>
            <person name="Grimmond S.M."/>
            <person name="Teasdale R.D."/>
            <person name="Liu E.T."/>
            <person name="Brusic V."/>
            <person name="Quackenbush J."/>
            <person name="Wahlestedt C."/>
            <person name="Mattick J.S."/>
            <person name="Hume D.A."/>
            <person name="Kai C."/>
            <person name="Sasaki D."/>
            <person name="Tomaru Y."/>
            <person name="Fukuda S."/>
            <person name="Kanamori-Katayama M."/>
            <person name="Suzuki M."/>
            <person name="Aoki J."/>
            <person name="Arakawa T."/>
            <person name="Iida J."/>
            <person name="Imamura K."/>
            <person name="Itoh M."/>
            <person name="Kato T."/>
            <person name="Kawaji H."/>
            <person name="Kawagashira N."/>
            <person name="Kawashima T."/>
            <person name="Kojima M."/>
            <person name="Kondo S."/>
            <person name="Konno H."/>
            <person name="Nakano K."/>
            <person name="Ninomiya N."/>
            <person name="Nishio T."/>
            <person name="Okada M."/>
            <person name="Plessy C."/>
            <person name="Shibata K."/>
            <person name="Shiraki T."/>
            <person name="Suzuki S."/>
            <person name="Tagami M."/>
            <person name="Waki K."/>
            <person name="Watahiki A."/>
            <person name="Okamura-Oho Y."/>
            <person name="Suzuki H."/>
            <person name="Kawai J."/>
            <person name="Hayashizaki Y."/>
        </authorList>
    </citation>
    <scope>NUCLEOTIDE SEQUENCE [LARGE SCALE MRNA]</scope>
    <source>
        <strain>C57BL/6J</strain>
        <tissue>Testis</tissue>
    </source>
</reference>
<reference key="2">
    <citation type="journal article" date="2009" name="PLoS Biol.">
        <title>Lineage-specific biology revealed by a finished genome assembly of the mouse.</title>
        <authorList>
            <person name="Church D.M."/>
            <person name="Goodstadt L."/>
            <person name="Hillier L.W."/>
            <person name="Zody M.C."/>
            <person name="Goldstein S."/>
            <person name="She X."/>
            <person name="Bult C.J."/>
            <person name="Agarwala R."/>
            <person name="Cherry J.L."/>
            <person name="DiCuccio M."/>
            <person name="Hlavina W."/>
            <person name="Kapustin Y."/>
            <person name="Meric P."/>
            <person name="Maglott D."/>
            <person name="Birtle Z."/>
            <person name="Marques A.C."/>
            <person name="Graves T."/>
            <person name="Zhou S."/>
            <person name="Teague B."/>
            <person name="Potamousis K."/>
            <person name="Churas C."/>
            <person name="Place M."/>
            <person name="Herschleb J."/>
            <person name="Runnheim R."/>
            <person name="Forrest D."/>
            <person name="Amos-Landgraf J."/>
            <person name="Schwartz D.C."/>
            <person name="Cheng Z."/>
            <person name="Lindblad-Toh K."/>
            <person name="Eichler E.E."/>
            <person name="Ponting C.P."/>
        </authorList>
    </citation>
    <scope>NUCLEOTIDE SEQUENCE [LARGE SCALE GENOMIC DNA]</scope>
    <source>
        <strain>C57BL/6J</strain>
    </source>
</reference>
<reference key="3">
    <citation type="submission" date="2005-09" db="EMBL/GenBank/DDBJ databases">
        <authorList>
            <person name="Mural R.J."/>
            <person name="Adams M.D."/>
            <person name="Myers E.W."/>
            <person name="Smith H.O."/>
            <person name="Venter J.C."/>
        </authorList>
    </citation>
    <scope>NUCLEOTIDE SEQUENCE [LARGE SCALE GENOMIC DNA]</scope>
</reference>
<reference key="4">
    <citation type="journal article" date="2004" name="Genome Res.">
        <title>The status, quality, and expansion of the NIH full-length cDNA project: the Mammalian Gene Collection (MGC).</title>
        <authorList>
            <consortium name="The MGC Project Team"/>
        </authorList>
    </citation>
    <scope>NUCLEOTIDE SEQUENCE [LARGE SCALE MRNA]</scope>
</reference>
<reference evidence="10" key="5">
    <citation type="journal article" date="2023" name="Cell">
        <title>Structures of sperm flagellar doublet microtubules expand the genetic spectrum of male infertility.</title>
        <authorList>
            <person name="Zhou L."/>
            <person name="Liu H."/>
            <person name="Liu S."/>
            <person name="Yang X."/>
            <person name="Dong Y."/>
            <person name="Pan Y."/>
            <person name="Xiao Z."/>
            <person name="Zheng B."/>
            <person name="Sun Y."/>
            <person name="Huang P."/>
            <person name="Zhang X."/>
            <person name="Hu J."/>
            <person name="Sun R."/>
            <person name="Feng S."/>
            <person name="Zhu Y."/>
            <person name="Liu M."/>
            <person name="Gui M."/>
            <person name="Wu J."/>
        </authorList>
    </citation>
    <scope>STRUCTURE BY ELECTRON MICROSCOPY (3.50 ANGSTROMS) OF SPERM FLAGELLAR DOUBLET MICROTUBULES</scope>
    <scope>FUNCTION</scope>
    <scope>SUBCELLULAR LOCATION</scope>
    <scope>SUBUNIT</scope>
</reference>
<reference evidence="11" key="6">
    <citation type="journal article" date="2023" name="Cell">
        <title>De novo protein identification in mammalian sperm using in situ cryoelectron tomography and AlphaFold2 docking.</title>
        <authorList>
            <person name="Chen Z."/>
            <person name="Shiozaki M."/>
            <person name="Haas K.M."/>
            <person name="Skinner W.M."/>
            <person name="Zhao S."/>
            <person name="Guo C."/>
            <person name="Polacco B.J."/>
            <person name="Yu Z."/>
            <person name="Krogan N.J."/>
            <person name="Lishko P.V."/>
            <person name="Kaake R.M."/>
            <person name="Vale R.D."/>
            <person name="Agard D.A."/>
        </authorList>
    </citation>
    <scope>STRUCTURE BY ELECTRON MICROSCOPY (7.70 ANGSTROMS) OF SPERM FLAGELLAR DOUBLET MICROTUBULES</scope>
    <scope>FUNCTION</scope>
    <scope>SUBCELLULAR LOCATION</scope>
    <scope>SUBUNIT</scope>
</reference>
<reference evidence="9" key="7">
    <citation type="journal article" date="2023" name="Cell Discov.">
        <title>In-cell structural insight into the stability of sperm microtubule doublet.</title>
        <authorList>
            <person name="Tai L."/>
            <person name="Yin G."/>
            <person name="Huang X."/>
            <person name="Sun F."/>
            <person name="Zhu Y."/>
        </authorList>
    </citation>
    <scope>STRUCTURE BY ELECTRON MICROSCOPY (4.50 ANGSTROMS)</scope>
    <scope>FUNCTION</scope>
    <scope>SUBUNIT</scope>
    <scope>SUBCELLULAR LOCATION</scope>
</reference>